<accession>A4Y434</accession>
<gene>
    <name evidence="1" type="primary">apaG</name>
    <name type="ordered locus">Sputcn32_0988</name>
</gene>
<reference key="1">
    <citation type="submission" date="2007-04" db="EMBL/GenBank/DDBJ databases">
        <title>Complete sequence of Shewanella putrefaciens CN-32.</title>
        <authorList>
            <consortium name="US DOE Joint Genome Institute"/>
            <person name="Copeland A."/>
            <person name="Lucas S."/>
            <person name="Lapidus A."/>
            <person name="Barry K."/>
            <person name="Detter J.C."/>
            <person name="Glavina del Rio T."/>
            <person name="Hammon N."/>
            <person name="Israni S."/>
            <person name="Dalin E."/>
            <person name="Tice H."/>
            <person name="Pitluck S."/>
            <person name="Chain P."/>
            <person name="Malfatti S."/>
            <person name="Shin M."/>
            <person name="Vergez L."/>
            <person name="Schmutz J."/>
            <person name="Larimer F."/>
            <person name="Land M."/>
            <person name="Hauser L."/>
            <person name="Kyrpides N."/>
            <person name="Mikhailova N."/>
            <person name="Romine M.F."/>
            <person name="Fredrickson J."/>
            <person name="Tiedje J."/>
            <person name="Richardson P."/>
        </authorList>
    </citation>
    <scope>NUCLEOTIDE SEQUENCE [LARGE SCALE GENOMIC DNA]</scope>
    <source>
        <strain>CN-32 / ATCC BAA-453</strain>
    </source>
</reference>
<proteinExistence type="inferred from homology"/>
<name>APAG_SHEPC</name>
<dbReference type="EMBL" id="CP000681">
    <property type="protein sequence ID" value="ABP74717.1"/>
    <property type="molecule type" value="Genomic_DNA"/>
</dbReference>
<dbReference type="SMR" id="A4Y434"/>
<dbReference type="STRING" id="319224.Sputcn32_0988"/>
<dbReference type="KEGG" id="spc:Sputcn32_0988"/>
<dbReference type="eggNOG" id="COG2967">
    <property type="taxonomic scope" value="Bacteria"/>
</dbReference>
<dbReference type="HOGENOM" id="CLU_128074_0_0_6"/>
<dbReference type="GO" id="GO:0070987">
    <property type="term" value="P:error-free translesion synthesis"/>
    <property type="evidence" value="ECO:0007669"/>
    <property type="project" value="TreeGrafter"/>
</dbReference>
<dbReference type="Gene3D" id="2.60.40.1470">
    <property type="entry name" value="ApaG domain"/>
    <property type="match status" value="1"/>
</dbReference>
<dbReference type="HAMAP" id="MF_00791">
    <property type="entry name" value="ApaG"/>
    <property type="match status" value="1"/>
</dbReference>
<dbReference type="InterPro" id="IPR007474">
    <property type="entry name" value="ApaG_domain"/>
</dbReference>
<dbReference type="InterPro" id="IPR036767">
    <property type="entry name" value="ApaG_sf"/>
</dbReference>
<dbReference type="InterPro" id="IPR023065">
    <property type="entry name" value="Uncharacterised_ApaG"/>
</dbReference>
<dbReference type="NCBIfam" id="NF003967">
    <property type="entry name" value="PRK05461.1"/>
    <property type="match status" value="1"/>
</dbReference>
<dbReference type="PANTHER" id="PTHR14289">
    <property type="entry name" value="F-BOX ONLY PROTEIN 3"/>
    <property type="match status" value="1"/>
</dbReference>
<dbReference type="PANTHER" id="PTHR14289:SF16">
    <property type="entry name" value="POLYMERASE DELTA-INTERACTING PROTEIN 2"/>
    <property type="match status" value="1"/>
</dbReference>
<dbReference type="Pfam" id="PF04379">
    <property type="entry name" value="DUF525"/>
    <property type="match status" value="1"/>
</dbReference>
<dbReference type="SUPFAM" id="SSF110069">
    <property type="entry name" value="ApaG-like"/>
    <property type="match status" value="1"/>
</dbReference>
<dbReference type="PROSITE" id="PS51087">
    <property type="entry name" value="APAG"/>
    <property type="match status" value="1"/>
</dbReference>
<sequence>MSALDTSIRVEVKTEYIEQQSSPEDEKYLFSYTITIINLGEQAAKLETRHWIITDANGNTSEVQGAGVVGETPTIPPNTAYQYTSGTLLDTPLGIMHGTYGMVSESGERFEAIIKPFRLATPGLLH</sequence>
<protein>
    <recommendedName>
        <fullName evidence="1">Protein ApaG</fullName>
    </recommendedName>
</protein>
<organism>
    <name type="scientific">Shewanella putrefaciens (strain CN-32 / ATCC BAA-453)</name>
    <dbReference type="NCBI Taxonomy" id="319224"/>
    <lineage>
        <taxon>Bacteria</taxon>
        <taxon>Pseudomonadati</taxon>
        <taxon>Pseudomonadota</taxon>
        <taxon>Gammaproteobacteria</taxon>
        <taxon>Alteromonadales</taxon>
        <taxon>Shewanellaceae</taxon>
        <taxon>Shewanella</taxon>
    </lineage>
</organism>
<evidence type="ECO:0000255" key="1">
    <source>
        <dbReference type="HAMAP-Rule" id="MF_00791"/>
    </source>
</evidence>
<feature type="chain" id="PRO_1000083653" description="Protein ApaG">
    <location>
        <begin position="1"/>
        <end position="126"/>
    </location>
</feature>
<feature type="domain" description="ApaG" evidence="1">
    <location>
        <begin position="2"/>
        <end position="126"/>
    </location>
</feature>